<reference key="1">
    <citation type="journal article" date="1998" name="Genomics">
        <title>Four ubiquitously expressed genes, RD (D6S45)-SKI2W (SKIV2L)-DOM3Z-RP1 (D6S60E), are present between complement component genes factor B and C4 in the class III region of the HLA.</title>
        <authorList>
            <person name="Yang Z."/>
            <person name="Shen L."/>
            <person name="Dangel A.W."/>
            <person name="Wu L.-C."/>
            <person name="Yu C.Y."/>
        </authorList>
    </citation>
    <scope>NUCLEOTIDE SEQUENCE [MRNA]</scope>
    <scope>VARIANT THR-28</scope>
    <scope>TISSUE SPECIFICITY</scope>
</reference>
<reference key="2">
    <citation type="journal article" date="2003" name="Genome Res.">
        <title>Analysis of the gene-dense major histocompatibility complex class III region and its comparison to mouse.</title>
        <authorList>
            <person name="Xie T."/>
            <person name="Rowen L."/>
            <person name="Aguado B."/>
            <person name="Ahearn M.E."/>
            <person name="Madan A."/>
            <person name="Qin S."/>
            <person name="Campbell R.D."/>
            <person name="Hood L."/>
        </authorList>
    </citation>
    <scope>NUCLEOTIDE SEQUENCE [LARGE SCALE GENOMIC DNA]</scope>
</reference>
<reference key="3">
    <citation type="submission" date="2005-07" db="EMBL/GenBank/DDBJ databases">
        <authorList>
            <person name="Mural R.J."/>
            <person name="Istrail S."/>
            <person name="Sutton G.G."/>
            <person name="Florea L."/>
            <person name="Halpern A.L."/>
            <person name="Mobarry C.M."/>
            <person name="Lippert R."/>
            <person name="Walenz B."/>
            <person name="Shatkay H."/>
            <person name="Dew I."/>
            <person name="Miller J.R."/>
            <person name="Flanigan M.J."/>
            <person name="Edwards N.J."/>
            <person name="Bolanos R."/>
            <person name="Fasulo D."/>
            <person name="Halldorsson B.V."/>
            <person name="Hannenhalli S."/>
            <person name="Turner R."/>
            <person name="Yooseph S."/>
            <person name="Lu F."/>
            <person name="Nusskern D.R."/>
            <person name="Shue B.C."/>
            <person name="Zheng X.H."/>
            <person name="Zhong F."/>
            <person name="Delcher A.L."/>
            <person name="Huson D.H."/>
            <person name="Kravitz S.A."/>
            <person name="Mouchard L."/>
            <person name="Reinert K."/>
            <person name="Remington K.A."/>
            <person name="Clark A.G."/>
            <person name="Waterman M.S."/>
            <person name="Eichler E.E."/>
            <person name="Adams M.D."/>
            <person name="Hunkapiller M.W."/>
            <person name="Myers E.W."/>
            <person name="Venter J.C."/>
        </authorList>
    </citation>
    <scope>NUCLEOTIDE SEQUENCE [LARGE SCALE GENOMIC DNA]</scope>
</reference>
<reference key="4">
    <citation type="journal article" date="2003" name="Nature">
        <title>The DNA sequence and analysis of human chromosome 6.</title>
        <authorList>
            <person name="Mungall A.J."/>
            <person name="Palmer S.A."/>
            <person name="Sims S.K."/>
            <person name="Edwards C.A."/>
            <person name="Ashurst J.L."/>
            <person name="Wilming L."/>
            <person name="Jones M.C."/>
            <person name="Horton R."/>
            <person name="Hunt S.E."/>
            <person name="Scott C.E."/>
            <person name="Gilbert J.G.R."/>
            <person name="Clamp M.E."/>
            <person name="Bethel G."/>
            <person name="Milne S."/>
            <person name="Ainscough R."/>
            <person name="Almeida J.P."/>
            <person name="Ambrose K.D."/>
            <person name="Andrews T.D."/>
            <person name="Ashwell R.I.S."/>
            <person name="Babbage A.K."/>
            <person name="Bagguley C.L."/>
            <person name="Bailey J."/>
            <person name="Banerjee R."/>
            <person name="Barker D.J."/>
            <person name="Barlow K.F."/>
            <person name="Bates K."/>
            <person name="Beare D.M."/>
            <person name="Beasley H."/>
            <person name="Beasley O."/>
            <person name="Bird C.P."/>
            <person name="Blakey S.E."/>
            <person name="Bray-Allen S."/>
            <person name="Brook J."/>
            <person name="Brown A.J."/>
            <person name="Brown J.Y."/>
            <person name="Burford D.C."/>
            <person name="Burrill W."/>
            <person name="Burton J."/>
            <person name="Carder C."/>
            <person name="Carter N.P."/>
            <person name="Chapman J.C."/>
            <person name="Clark S.Y."/>
            <person name="Clark G."/>
            <person name="Clee C.M."/>
            <person name="Clegg S."/>
            <person name="Cobley V."/>
            <person name="Collier R.E."/>
            <person name="Collins J.E."/>
            <person name="Colman L.K."/>
            <person name="Corby N.R."/>
            <person name="Coville G.J."/>
            <person name="Culley K.M."/>
            <person name="Dhami P."/>
            <person name="Davies J."/>
            <person name="Dunn M."/>
            <person name="Earthrowl M.E."/>
            <person name="Ellington A.E."/>
            <person name="Evans K.A."/>
            <person name="Faulkner L."/>
            <person name="Francis M.D."/>
            <person name="Frankish A."/>
            <person name="Frankland J."/>
            <person name="French L."/>
            <person name="Garner P."/>
            <person name="Garnett J."/>
            <person name="Ghori M.J."/>
            <person name="Gilby L.M."/>
            <person name="Gillson C.J."/>
            <person name="Glithero R.J."/>
            <person name="Grafham D.V."/>
            <person name="Grant M."/>
            <person name="Gribble S."/>
            <person name="Griffiths C."/>
            <person name="Griffiths M.N.D."/>
            <person name="Hall R."/>
            <person name="Halls K.S."/>
            <person name="Hammond S."/>
            <person name="Harley J.L."/>
            <person name="Hart E.A."/>
            <person name="Heath P.D."/>
            <person name="Heathcott R."/>
            <person name="Holmes S.J."/>
            <person name="Howden P.J."/>
            <person name="Howe K.L."/>
            <person name="Howell G.R."/>
            <person name="Huckle E."/>
            <person name="Humphray S.J."/>
            <person name="Humphries M.D."/>
            <person name="Hunt A.R."/>
            <person name="Johnson C.M."/>
            <person name="Joy A.A."/>
            <person name="Kay M."/>
            <person name="Keenan S.J."/>
            <person name="Kimberley A.M."/>
            <person name="King A."/>
            <person name="Laird G.K."/>
            <person name="Langford C."/>
            <person name="Lawlor S."/>
            <person name="Leongamornlert D.A."/>
            <person name="Leversha M."/>
            <person name="Lloyd C.R."/>
            <person name="Lloyd D.M."/>
            <person name="Loveland J.E."/>
            <person name="Lovell J."/>
            <person name="Martin S."/>
            <person name="Mashreghi-Mohammadi M."/>
            <person name="Maslen G.L."/>
            <person name="Matthews L."/>
            <person name="McCann O.T."/>
            <person name="McLaren S.J."/>
            <person name="McLay K."/>
            <person name="McMurray A."/>
            <person name="Moore M.J.F."/>
            <person name="Mullikin J.C."/>
            <person name="Niblett D."/>
            <person name="Nickerson T."/>
            <person name="Novik K.L."/>
            <person name="Oliver K."/>
            <person name="Overton-Larty E.K."/>
            <person name="Parker A."/>
            <person name="Patel R."/>
            <person name="Pearce A.V."/>
            <person name="Peck A.I."/>
            <person name="Phillimore B.J.C.T."/>
            <person name="Phillips S."/>
            <person name="Plumb R.W."/>
            <person name="Porter K.M."/>
            <person name="Ramsey Y."/>
            <person name="Ranby S.A."/>
            <person name="Rice C.M."/>
            <person name="Ross M.T."/>
            <person name="Searle S.M."/>
            <person name="Sehra H.K."/>
            <person name="Sheridan E."/>
            <person name="Skuce C.D."/>
            <person name="Smith S."/>
            <person name="Smith M."/>
            <person name="Spraggon L."/>
            <person name="Squares S.L."/>
            <person name="Steward C.A."/>
            <person name="Sycamore N."/>
            <person name="Tamlyn-Hall G."/>
            <person name="Tester J."/>
            <person name="Theaker A.J."/>
            <person name="Thomas D.W."/>
            <person name="Thorpe A."/>
            <person name="Tracey A."/>
            <person name="Tromans A."/>
            <person name="Tubby B."/>
            <person name="Wall M."/>
            <person name="Wallis J.M."/>
            <person name="West A.P."/>
            <person name="White S.S."/>
            <person name="Whitehead S.L."/>
            <person name="Whittaker H."/>
            <person name="Wild A."/>
            <person name="Willey D.J."/>
            <person name="Wilmer T.E."/>
            <person name="Wood J.M."/>
            <person name="Wray P.W."/>
            <person name="Wyatt J.C."/>
            <person name="Young L."/>
            <person name="Younger R.M."/>
            <person name="Bentley D.R."/>
            <person name="Coulson A."/>
            <person name="Durbin R.M."/>
            <person name="Hubbard T."/>
            <person name="Sulston J.E."/>
            <person name="Dunham I."/>
            <person name="Rogers J."/>
            <person name="Beck S."/>
        </authorList>
    </citation>
    <scope>NUCLEOTIDE SEQUENCE [LARGE SCALE GENOMIC DNA]</scope>
    <scope>VARIANT GLN-261</scope>
</reference>
<reference key="5">
    <citation type="journal article" date="2004" name="Genome Res.">
        <title>The status, quality, and expansion of the NIH full-length cDNA project: the Mammalian Gene Collection (MGC).</title>
        <authorList>
            <consortium name="The MGC Project Team"/>
        </authorList>
    </citation>
    <scope>NUCLEOTIDE SEQUENCE [LARGE SCALE MRNA]</scope>
    <source>
        <tissue>Neuroblastoma</tissue>
        <tissue>Retinoblastoma</tissue>
    </source>
</reference>
<reference key="6">
    <citation type="journal article" date="2000" name="Exp. Clin. Immunogenet.">
        <title>Organizations and gene duplications of the human and mouse MHC complement gene clusters.</title>
        <authorList>
            <person name="Yang Z."/>
            <person name="Yu C.Y."/>
        </authorList>
    </citation>
    <scope>NUCLEOTIDE SEQUENCE [MRNA] OF 1-106</scope>
    <scope>VARIANT THR-28</scope>
</reference>
<reference key="7">
    <citation type="journal article" date="2011" name="RNA">
        <title>Unraveling regulation and new components of human P-bodies through a protein interaction framework and experimental validation.</title>
        <authorList>
            <person name="Zheng D."/>
            <person name="Chen C.Y."/>
            <person name="Shyu A.B."/>
        </authorList>
    </citation>
    <scope>SUBCELLULAR LOCATION</scope>
</reference>
<reference key="8">
    <citation type="journal article" date="2017" name="Cell">
        <title>5' end nicotinamide adenine dinucleotide cap in human cells promotes RNA decay through DXO-mediated deNADding.</title>
        <authorList>
            <person name="Jiao X."/>
            <person name="Doamekpor S.K."/>
            <person name="Bird J.G."/>
            <person name="Nickels B.E."/>
            <person name="Tong L."/>
            <person name="Hart R.P."/>
            <person name="Kiledjian M."/>
        </authorList>
    </citation>
    <scope>FUNCTION</scope>
    <scope>CATALYTIC ACTIVITY</scope>
</reference>
<reference key="9">
    <citation type="journal article" date="2018" name="PLoS ONE">
        <title>2'-O-methylation of the mRNA cap protects RNAs from decapping and degradation by DXO.</title>
        <authorList>
            <person name="Picard-Jean F."/>
            <person name="Brand C."/>
            <person name="Tremblay-Letourneau M."/>
            <person name="Allaire A."/>
            <person name="Beaudoin M.C."/>
            <person name="Boudreault S."/>
            <person name="Duval C."/>
            <person name="Rainville-Sirois J."/>
            <person name="Robert F."/>
            <person name="Pelletier J."/>
            <person name="Geiss B.J."/>
            <person name="Bisaillon M."/>
        </authorList>
    </citation>
    <scope>FUNCTION</scope>
    <scope>CATALYTIC ACTIVITY</scope>
    <scope>SUBCELLULAR LOCATION</scope>
    <scope>MUTAGENESIS OF 7-LYS-ARG-8; ASP-236 AND GLU-253</scope>
</reference>
<reference key="10">
    <citation type="journal article" date="2019" name="Nat. Chem. Biol.">
        <title>Structural and mechanistic basis of mammalian Nudt12 RNA deNADding.</title>
        <authorList>
            <person name="Grudzien-Nogalska E."/>
            <person name="Wu Y."/>
            <person name="Jiao X."/>
            <person name="Cui H."/>
            <person name="Mateyak M.K."/>
            <person name="Hart R.P."/>
            <person name="Tong L."/>
            <person name="Kiledjian M."/>
        </authorList>
    </citation>
    <scope>FUNCTION</scope>
</reference>
<reference key="11">
    <citation type="journal article" date="2020" name="Nucleic Acids Res.">
        <title>DXO/Rai1 enzymes remove 5'-end FAD and dephospho-CoA caps on RNAs.</title>
        <authorList>
            <person name="Doamekpor S.K."/>
            <person name="Grudzien-Nogalska E."/>
            <person name="Mlynarska-Cieslak A."/>
            <person name="Kowalska J."/>
            <person name="Kiledjian M."/>
            <person name="Tong L."/>
        </authorList>
    </citation>
    <scope>FUNCTION</scope>
    <scope>CATALYTIC ACTIVITY</scope>
</reference>
<name>DXO_HUMAN</name>
<keyword id="KW-0269">Exonuclease</keyword>
<keyword id="KW-0378">Hydrolase</keyword>
<keyword id="KW-0460">Magnesium</keyword>
<keyword id="KW-0479">Metal-binding</keyword>
<keyword id="KW-0540">Nuclease</keyword>
<keyword id="KW-0547">Nucleotide-binding</keyword>
<keyword id="KW-0539">Nucleus</keyword>
<keyword id="KW-0597">Phosphoprotein</keyword>
<keyword id="KW-1267">Proteomics identification</keyword>
<keyword id="KW-1185">Reference proteome</keyword>
<keyword id="KW-0694">RNA-binding</keyword>
<feature type="chain" id="PRO_0000249822" description="Decapping and exoribonuclease protein">
    <location>
        <begin position="1"/>
        <end position="396"/>
    </location>
</feature>
<feature type="region of interest" description="Disordered" evidence="3">
    <location>
        <begin position="1"/>
        <end position="37"/>
    </location>
</feature>
<feature type="compositionally biased region" description="Basic and acidic residues" evidence="3">
    <location>
        <begin position="1"/>
        <end position="20"/>
    </location>
</feature>
<feature type="binding site" evidence="1">
    <location>
        <position position="58"/>
    </location>
    <ligand>
        <name>substrate</name>
    </ligand>
</feature>
<feature type="binding site" evidence="1">
    <location>
        <position position="101"/>
    </location>
    <ligand>
        <name>substrate</name>
    </ligand>
</feature>
<feature type="binding site" evidence="1">
    <location>
        <begin position="131"/>
        <end position="133"/>
    </location>
    <ligand>
        <name>substrate</name>
    </ligand>
</feature>
<feature type="binding site" evidence="1">
    <location>
        <position position="192"/>
    </location>
    <ligand>
        <name>Mg(2+)</name>
        <dbReference type="ChEBI" id="CHEBI:18420"/>
        <label>1</label>
    </ligand>
</feature>
<feature type="binding site" evidence="1">
    <location>
        <position position="192"/>
    </location>
    <ligand>
        <name>Mg(2+)</name>
        <dbReference type="ChEBI" id="CHEBI:18420"/>
        <label>2</label>
    </ligand>
</feature>
<feature type="binding site" evidence="1">
    <location>
        <position position="217"/>
    </location>
    <ligand>
        <name>substrate</name>
    </ligand>
</feature>
<feature type="binding site" evidence="1">
    <location>
        <position position="234"/>
    </location>
    <ligand>
        <name>Mg(2+)</name>
        <dbReference type="ChEBI" id="CHEBI:18420"/>
        <label>2</label>
    </ligand>
</feature>
<feature type="binding site" evidence="1">
    <location>
        <position position="234"/>
    </location>
    <ligand>
        <name>substrate</name>
    </ligand>
</feature>
<feature type="binding site" evidence="16">
    <location>
        <position position="236"/>
    </location>
    <ligand>
        <name>Mg(2+)</name>
        <dbReference type="ChEBI" id="CHEBI:18420"/>
        <label>1</label>
    </ligand>
</feature>
<feature type="binding site" evidence="1">
    <location>
        <position position="236"/>
    </location>
    <ligand>
        <name>Mg(2+)</name>
        <dbReference type="ChEBI" id="CHEBI:18420"/>
        <label>2</label>
    </ligand>
</feature>
<feature type="binding site" evidence="16">
    <location>
        <position position="253"/>
    </location>
    <ligand>
        <name>Mg(2+)</name>
        <dbReference type="ChEBI" id="CHEBI:18420"/>
        <label>1</label>
    </ligand>
</feature>
<feature type="binding site" evidence="1">
    <location>
        <position position="254"/>
    </location>
    <ligand>
        <name>Mg(2+)</name>
        <dbReference type="ChEBI" id="CHEBI:18420"/>
        <label>1</label>
    </ligand>
</feature>
<feature type="binding site" evidence="1">
    <location>
        <position position="255"/>
    </location>
    <ligand>
        <name>substrate</name>
    </ligand>
</feature>
<feature type="binding site" evidence="1">
    <location>
        <position position="280"/>
    </location>
    <ligand>
        <name>substrate</name>
    </ligand>
</feature>
<feature type="modified residue" description="Phosphothreonine" evidence="2">
    <location>
        <position position="392"/>
    </location>
</feature>
<feature type="modified residue" description="Phosphoserine" evidence="1">
    <location>
        <position position="394"/>
    </location>
</feature>
<feature type="sequence variant" id="VAR_027492" description="In dbSNP:rs1056694." evidence="4 11">
    <original>S</original>
    <variation>T</variation>
    <location>
        <position position="28"/>
    </location>
</feature>
<feature type="sequence variant" id="VAR_027493" description="In dbSNP:rs2746396.">
    <original>D</original>
    <variation>E</variation>
    <location>
        <position position="63"/>
    </location>
</feature>
<feature type="sequence variant" id="VAR_027494" description="In dbSNP:rs17207867." evidence="5">
    <original>H</original>
    <variation>Q</variation>
    <location>
        <position position="261"/>
    </location>
</feature>
<feature type="sequence variant" id="VAR_027495" description="In dbSNP:rs12205138.">
    <original>A</original>
    <variation>V</variation>
    <location>
        <position position="332"/>
    </location>
</feature>
<feature type="mutagenesis site" description="Impaired subcellular location, leading to localization both in cytoplasm and nucleus." evidence="8">
    <original>KR</original>
    <variation>AA</variation>
    <location>
        <begin position="7"/>
        <end position="8"/>
    </location>
</feature>
<feature type="mutagenesis site" description="Abolishes the decapping activity on incomplete m7G cap mRNAs; when associated with A-253." evidence="8">
    <original>D</original>
    <variation>A</variation>
    <location>
        <position position="236"/>
    </location>
</feature>
<feature type="mutagenesis site" description="Abolishes the decapping activity on incomplete m7G cap mRNAs; when associated with A-236." evidence="8">
    <original>E</original>
    <variation>A</variation>
    <location>
        <position position="253"/>
    </location>
</feature>
<dbReference type="EC" id="3.6.1.-" evidence="8 1"/>
<dbReference type="EC" id="3.1.13.-" evidence="8"/>
<dbReference type="EMBL" id="AF059252">
    <property type="protein sequence ID" value="AAC78603.1"/>
    <property type="molecule type" value="mRNA"/>
</dbReference>
<dbReference type="EMBL" id="AF019413">
    <property type="protein sequence ID" value="AAB67983.1"/>
    <property type="status" value="ALT_SEQ"/>
    <property type="molecule type" value="Genomic_DNA"/>
</dbReference>
<dbReference type="EMBL" id="AL049547">
    <property type="protein sequence ID" value="CAB89305.1"/>
    <property type="molecule type" value="Genomic_DNA"/>
</dbReference>
<dbReference type="EMBL" id="AL049547">
    <property type="protein sequence ID" value="CAB89306.1"/>
    <property type="status" value="ALT_SEQ"/>
    <property type="molecule type" value="Genomic_DNA"/>
</dbReference>
<dbReference type="EMBL" id="AL662849">
    <property type="status" value="NOT_ANNOTATED_CDS"/>
    <property type="molecule type" value="Genomic_DNA"/>
</dbReference>
<dbReference type="EMBL" id="AL844853">
    <property type="status" value="NOT_ANNOTATED_CDS"/>
    <property type="molecule type" value="Genomic_DNA"/>
</dbReference>
<dbReference type="EMBL" id="CR753822">
    <property type="status" value="NOT_ANNOTATED_CDS"/>
    <property type="molecule type" value="Genomic_DNA"/>
</dbReference>
<dbReference type="EMBL" id="CR759782">
    <property type="status" value="NOT_ANNOTATED_CDS"/>
    <property type="molecule type" value="Genomic_DNA"/>
</dbReference>
<dbReference type="EMBL" id="AL645922">
    <property type="status" value="NOT_ANNOTATED_CDS"/>
    <property type="molecule type" value="Genomic_DNA"/>
</dbReference>
<dbReference type="EMBL" id="CR753845">
    <property type="status" value="NOT_ANNOTATED_CDS"/>
    <property type="molecule type" value="Genomic_DNA"/>
</dbReference>
<dbReference type="EMBL" id="CH471081">
    <property type="protein sequence ID" value="EAX03558.1"/>
    <property type="molecule type" value="Genomic_DNA"/>
</dbReference>
<dbReference type="EMBL" id="BC009344">
    <property type="protein sequence ID" value="AAH09344.1"/>
    <property type="molecule type" value="mRNA"/>
</dbReference>
<dbReference type="EMBL" id="BC019083">
    <property type="protein sequence ID" value="AAH19083.1"/>
    <property type="molecule type" value="mRNA"/>
</dbReference>
<dbReference type="EMBL" id="AF059253">
    <property type="protein sequence ID" value="AAC78604.1"/>
    <property type="molecule type" value="mRNA"/>
</dbReference>
<dbReference type="EMBL" id="AF059254">
    <property type="protein sequence ID" value="AAC78605.1"/>
    <property type="molecule type" value="mRNA"/>
</dbReference>
<dbReference type="CCDS" id="CCDS4732.1"/>
<dbReference type="RefSeq" id="NP_005501.2">
    <property type="nucleotide sequence ID" value="NM_005510.3"/>
</dbReference>
<dbReference type="RefSeq" id="XP_006715068.1">
    <property type="nucleotide sequence ID" value="XM_006715005.4"/>
</dbReference>
<dbReference type="RefSeq" id="XP_047274218.1">
    <property type="nucleotide sequence ID" value="XM_047418262.1"/>
</dbReference>
<dbReference type="RefSeq" id="XP_054185719.1">
    <property type="nucleotide sequence ID" value="XM_054329744.1"/>
</dbReference>
<dbReference type="RefSeq" id="XP_054186754.1">
    <property type="nucleotide sequence ID" value="XM_054330779.1"/>
</dbReference>
<dbReference type="RefSeq" id="XP_054186990.1">
    <property type="nucleotide sequence ID" value="XM_054331015.1"/>
</dbReference>
<dbReference type="RefSeq" id="XP_054187256.1">
    <property type="nucleotide sequence ID" value="XM_054331281.1"/>
</dbReference>
<dbReference type="RefSeq" id="XP_054210391.1">
    <property type="nucleotide sequence ID" value="XM_054354416.1"/>
</dbReference>
<dbReference type="SMR" id="O77932"/>
<dbReference type="BioGRID" id="108132">
    <property type="interactions" value="20"/>
</dbReference>
<dbReference type="FunCoup" id="O77932">
    <property type="interactions" value="2596"/>
</dbReference>
<dbReference type="IntAct" id="O77932">
    <property type="interactions" value="36"/>
</dbReference>
<dbReference type="MINT" id="O77932"/>
<dbReference type="STRING" id="9606.ENSP00000364498"/>
<dbReference type="iPTMnet" id="O77932"/>
<dbReference type="PhosphoSitePlus" id="O77932"/>
<dbReference type="BioMuta" id="DXO"/>
<dbReference type="jPOST" id="O77932"/>
<dbReference type="MassIVE" id="O77932"/>
<dbReference type="PaxDb" id="9606-ENSP00000364498"/>
<dbReference type="PeptideAtlas" id="O77932"/>
<dbReference type="ProteomicsDB" id="50418"/>
<dbReference type="Pumba" id="O77932"/>
<dbReference type="Antibodypedia" id="45412">
    <property type="antibodies" value="139 antibodies from 22 providers"/>
</dbReference>
<dbReference type="DNASU" id="1797"/>
<dbReference type="Ensembl" id="ENST00000337523.10">
    <property type="protein sequence ID" value="ENSP00000337759.5"/>
    <property type="gene ID" value="ENSG00000204348.10"/>
</dbReference>
<dbReference type="Ensembl" id="ENST00000375349.7">
    <property type="protein sequence ID" value="ENSP00000364498.3"/>
    <property type="gene ID" value="ENSG00000204348.10"/>
</dbReference>
<dbReference type="Ensembl" id="ENST00000375356.7">
    <property type="protein sequence ID" value="ENSP00000364505.3"/>
    <property type="gene ID" value="ENSG00000204348.10"/>
</dbReference>
<dbReference type="Ensembl" id="ENST00000383330.4">
    <property type="protein sequence ID" value="ENSP00000372820.4"/>
    <property type="gene ID" value="ENSG00000206346.8"/>
</dbReference>
<dbReference type="Ensembl" id="ENST00000399936.5">
    <property type="protein sequence ID" value="ENSP00000382818.1"/>
    <property type="gene ID" value="ENSG00000206346.8"/>
</dbReference>
<dbReference type="Ensembl" id="ENST00000399937.5">
    <property type="protein sequence ID" value="ENSP00000382819.1"/>
    <property type="gene ID" value="ENSG00000206346.8"/>
</dbReference>
<dbReference type="Ensembl" id="ENST00000414092.2">
    <property type="protein sequence ID" value="ENSP00000391123.2"/>
    <property type="gene ID" value="ENSG00000236765.6"/>
</dbReference>
<dbReference type="Ensembl" id="ENST00000419797.6">
    <property type="protein sequence ID" value="ENSP00000391532.2"/>
    <property type="gene ID" value="ENSG00000234798.6"/>
</dbReference>
<dbReference type="Ensembl" id="ENST00000426498.5">
    <property type="protein sequence ID" value="ENSP00000394167.1"/>
    <property type="gene ID" value="ENSG00000225682.6"/>
</dbReference>
<dbReference type="Ensembl" id="ENST00000427627.1">
    <property type="protein sequence ID" value="ENSP00000413860.1"/>
    <property type="gene ID" value="ENSG00000234798.6"/>
</dbReference>
<dbReference type="Ensembl" id="ENST00000427690.5">
    <property type="protein sequence ID" value="ENSP00000406143.1"/>
    <property type="gene ID" value="ENSG00000225682.6"/>
</dbReference>
<dbReference type="Ensembl" id="ENST00000432110.5">
    <property type="protein sequence ID" value="ENSP00000401315.1"/>
    <property type="gene ID" value="ENSG00000236765.6"/>
</dbReference>
<dbReference type="Ensembl" id="ENST00000439989.5">
    <property type="protein sequence ID" value="ENSP00000395262.1"/>
    <property type="gene ID" value="ENSG00000224313.6"/>
</dbReference>
<dbReference type="Ensembl" id="ENST00000443250.5">
    <property type="protein sequence ID" value="ENSP00000415675.1"/>
    <property type="gene ID" value="ENSG00000224313.6"/>
</dbReference>
<dbReference type="Ensembl" id="ENST00000446967.5">
    <property type="protein sequence ID" value="ENSP00000391349.1"/>
    <property type="gene ID" value="ENSG00000234798.6"/>
</dbReference>
<dbReference type="Ensembl" id="ENST00000453742.2">
    <property type="protein sequence ID" value="ENSP00000410404.2"/>
    <property type="gene ID" value="ENSG00000225682.6"/>
</dbReference>
<dbReference type="Ensembl" id="ENST00000454430.2">
    <property type="protein sequence ID" value="ENSP00000411380.2"/>
    <property type="gene ID" value="ENSG00000224313.6"/>
</dbReference>
<dbReference type="Ensembl" id="ENST00000458308.5">
    <property type="protein sequence ID" value="ENSP00000400173.1"/>
    <property type="gene ID" value="ENSG00000236765.6"/>
</dbReference>
<dbReference type="GeneID" id="1797"/>
<dbReference type="KEGG" id="hsa:1797"/>
<dbReference type="MANE-Select" id="ENST00000337523.10">
    <property type="protein sequence ID" value="ENSP00000337759.5"/>
    <property type="RefSeq nucleotide sequence ID" value="NM_005510.4"/>
    <property type="RefSeq protein sequence ID" value="NP_005501.2"/>
</dbReference>
<dbReference type="UCSC" id="uc003nyp.2">
    <property type="organism name" value="human"/>
</dbReference>
<dbReference type="AGR" id="HGNC:2992"/>
<dbReference type="CTD" id="1797"/>
<dbReference type="DisGeNET" id="1797"/>
<dbReference type="GeneCards" id="DXO"/>
<dbReference type="HGNC" id="HGNC:2992">
    <property type="gene designation" value="DXO"/>
</dbReference>
<dbReference type="HPA" id="ENSG00000204348">
    <property type="expression patterns" value="Low tissue specificity"/>
</dbReference>
<dbReference type="MIM" id="605996">
    <property type="type" value="gene"/>
</dbReference>
<dbReference type="neXtProt" id="NX_O77932"/>
<dbReference type="OpenTargets" id="ENSG00000204348"/>
<dbReference type="PharmGKB" id="PA27458"/>
<dbReference type="VEuPathDB" id="HostDB:ENSG00000204348"/>
<dbReference type="eggNOG" id="KOG1982">
    <property type="taxonomic scope" value="Eukaryota"/>
</dbReference>
<dbReference type="GeneTree" id="ENSGT00390000006425"/>
<dbReference type="HOGENOM" id="CLU_024877_1_2_1"/>
<dbReference type="InParanoid" id="O77932"/>
<dbReference type="OMA" id="VVTWRGH"/>
<dbReference type="OrthoDB" id="5853397at2759"/>
<dbReference type="PAN-GO" id="O77932">
    <property type="GO annotations" value="6 GO annotations based on evolutionary models"/>
</dbReference>
<dbReference type="PhylomeDB" id="O77932"/>
<dbReference type="TreeFam" id="TF322812"/>
<dbReference type="PathwayCommons" id="O77932"/>
<dbReference type="SignaLink" id="O77932"/>
<dbReference type="BioGRID-ORCS" id="1797">
    <property type="hits" value="49 hits in 1131 CRISPR screens"/>
</dbReference>
<dbReference type="ChiTaRS" id="DXO">
    <property type="organism name" value="human"/>
</dbReference>
<dbReference type="GeneWiki" id="DOM3Z"/>
<dbReference type="GenomeRNAi" id="1797"/>
<dbReference type="Pharos" id="O77932">
    <property type="development level" value="Tbio"/>
</dbReference>
<dbReference type="PRO" id="PR:O77932"/>
<dbReference type="Proteomes" id="UP000005640">
    <property type="component" value="Chromosome 6"/>
</dbReference>
<dbReference type="RNAct" id="O77932">
    <property type="molecule type" value="protein"/>
</dbReference>
<dbReference type="Bgee" id="ENSG00000204348">
    <property type="expression patterns" value="Expressed in left testis and 94 other cell types or tissues"/>
</dbReference>
<dbReference type="ExpressionAtlas" id="O77932">
    <property type="expression patterns" value="baseline and differential"/>
</dbReference>
<dbReference type="GO" id="GO:0005829">
    <property type="term" value="C:cytosol"/>
    <property type="evidence" value="ECO:0000314"/>
    <property type="project" value="HPA"/>
</dbReference>
<dbReference type="GO" id="GO:0005654">
    <property type="term" value="C:nucleoplasm"/>
    <property type="evidence" value="ECO:0000314"/>
    <property type="project" value="HPA"/>
</dbReference>
<dbReference type="GO" id="GO:0005634">
    <property type="term" value="C:nucleus"/>
    <property type="evidence" value="ECO:0000314"/>
    <property type="project" value="UniProtKB"/>
</dbReference>
<dbReference type="GO" id="GO:0005886">
    <property type="term" value="C:plasma membrane"/>
    <property type="evidence" value="ECO:0000314"/>
    <property type="project" value="HPA"/>
</dbReference>
<dbReference type="GO" id="GO:0008409">
    <property type="term" value="F:5'-3' exonuclease activity"/>
    <property type="evidence" value="ECO:0000250"/>
    <property type="project" value="UniProtKB"/>
</dbReference>
<dbReference type="GO" id="GO:0000287">
    <property type="term" value="F:magnesium ion binding"/>
    <property type="evidence" value="ECO:0000250"/>
    <property type="project" value="UniProtKB"/>
</dbReference>
<dbReference type="GO" id="GO:0034353">
    <property type="term" value="F:mRNA 5'-diphosphatase activity"/>
    <property type="evidence" value="ECO:0000250"/>
    <property type="project" value="UniProtKB"/>
</dbReference>
<dbReference type="GO" id="GO:0003729">
    <property type="term" value="F:mRNA binding"/>
    <property type="evidence" value="ECO:0000250"/>
    <property type="project" value="UniProtKB"/>
</dbReference>
<dbReference type="GO" id="GO:0000166">
    <property type="term" value="F:nucleotide binding"/>
    <property type="evidence" value="ECO:0007669"/>
    <property type="project" value="UniProtKB-KW"/>
</dbReference>
<dbReference type="GO" id="GO:0110152">
    <property type="term" value="F:RNA NAD+-cap (NAD+-forming) hydrolase activity"/>
    <property type="evidence" value="ECO:0000250"/>
    <property type="project" value="UniProtKB"/>
</dbReference>
<dbReference type="GO" id="GO:0006402">
    <property type="term" value="P:mRNA catabolic process"/>
    <property type="evidence" value="ECO:0000314"/>
    <property type="project" value="UniProtKB"/>
</dbReference>
<dbReference type="GO" id="GO:0110155">
    <property type="term" value="P:NAD-cap decapping"/>
    <property type="evidence" value="ECO:0000314"/>
    <property type="project" value="UniProtKB"/>
</dbReference>
<dbReference type="GO" id="GO:0071028">
    <property type="term" value="P:nuclear mRNA surveillance"/>
    <property type="evidence" value="ECO:0000250"/>
    <property type="project" value="UniProtKB"/>
</dbReference>
<dbReference type="GO" id="GO:0000956">
    <property type="term" value="P:nuclear-transcribed mRNA catabolic process"/>
    <property type="evidence" value="ECO:0000318"/>
    <property type="project" value="GO_Central"/>
</dbReference>
<dbReference type="GO" id="GO:0090304">
    <property type="term" value="P:nucleic acid metabolic process"/>
    <property type="evidence" value="ECO:0000250"/>
    <property type="project" value="UniProtKB"/>
</dbReference>
<dbReference type="GO" id="GO:0050779">
    <property type="term" value="P:RNA destabilization"/>
    <property type="evidence" value="ECO:0000250"/>
    <property type="project" value="UniProtKB"/>
</dbReference>
<dbReference type="InterPro" id="IPR013961">
    <property type="entry name" value="RAI1"/>
</dbReference>
<dbReference type="InterPro" id="IPR039039">
    <property type="entry name" value="RAI1-like_fam"/>
</dbReference>
<dbReference type="PANTHER" id="PTHR12395:SF9">
    <property type="entry name" value="DECAPPING AND EXORIBONUCLEASE PROTEIN"/>
    <property type="match status" value="1"/>
</dbReference>
<dbReference type="PANTHER" id="PTHR12395">
    <property type="entry name" value="DOM-3 RELATED"/>
    <property type="match status" value="1"/>
</dbReference>
<dbReference type="Pfam" id="PF08652">
    <property type="entry name" value="RAI1"/>
    <property type="match status" value="1"/>
</dbReference>
<gene>
    <name evidence="12 17" type="primary">DXO</name>
    <name type="synonym">DOM3L</name>
    <name evidence="13" type="synonym">DOM3Z</name>
    <name type="synonym">NG6</name>
</gene>
<evidence type="ECO:0000250" key="1">
    <source>
        <dbReference type="UniProtKB" id="O70348"/>
    </source>
</evidence>
<evidence type="ECO:0000250" key="2">
    <source>
        <dbReference type="UniProtKB" id="Q6MG77"/>
    </source>
</evidence>
<evidence type="ECO:0000256" key="3">
    <source>
        <dbReference type="SAM" id="MobiDB-lite"/>
    </source>
</evidence>
<evidence type="ECO:0000269" key="4">
    <source>
    </source>
</evidence>
<evidence type="ECO:0000269" key="5">
    <source>
    </source>
</evidence>
<evidence type="ECO:0000269" key="6">
    <source>
    </source>
</evidence>
<evidence type="ECO:0000269" key="7">
    <source>
    </source>
</evidence>
<evidence type="ECO:0000269" key="8">
    <source>
    </source>
</evidence>
<evidence type="ECO:0000269" key="9">
    <source>
    </source>
</evidence>
<evidence type="ECO:0000269" key="10">
    <source>
    </source>
</evidence>
<evidence type="ECO:0000269" key="11">
    <source>
    </source>
</evidence>
<evidence type="ECO:0000303" key="12">
    <source>
    </source>
</evidence>
<evidence type="ECO:0000303" key="13">
    <source>
    </source>
</evidence>
<evidence type="ECO:0000305" key="14"/>
<evidence type="ECO:0000305" key="15">
    <source>
    </source>
</evidence>
<evidence type="ECO:0000305" key="16">
    <source>
    </source>
</evidence>
<evidence type="ECO:0000312" key="17">
    <source>
        <dbReference type="HGNC" id="HGNC:2992"/>
    </source>
</evidence>
<sequence length="396" mass="44929">MDPRGTKRGAEKTEVAEPRNKLPRPAPSLPTDPALYSGPFPFYRRPSELGCFSLDAQRQYHGDARALRYYSPPPTNGPGPNFDLRDGYPDRYQPRDEEVQERLDHLLCWLLEHRGRLEGGPGWLAEAIVTWRGHLTKLLTTPYERQEGWQLAASRFQGTLYLSEVETPNARAQRLARPPLLRELMYMGYKFEQYMCADKPGSSPDPSGEVNTNVAFCSVLRSRLGSHPLLFSGEVDCTDPQAPSTQPPTCYVELKTSKEMHSPGQWRSFYRHKLLKWWAQSFLPGVPNVVAGFRNPDGFVSSLKTFPTMKMFEYVRNDRDGWNPSVCMNFCAAFLSFAQSTVVQDDPRLVHLFSWEPGGPVTVSVHQDAPYAFLPIWYVEAMTQDLPSPPKTPSPK</sequence>
<comment type="function">
    <text evidence="1 7 8 9 10">Decapping enzyme for NAD-capped RNAs: specifically hydrolyzes the nicotinamide adenine dinucleotide (NAD) cap from a subset of RNAs by removing the entire NAD moiety from the 5'-end of an NAD-capped RNA (PubMed:28283058). The NAD-cap is present at the 5'-end of some RNAs and snoRNAs (PubMed:28283058). In contrast to the canonical 5'-end N7 methylguanosine (m7G) cap, the NAD cap promotes mRNA decay (PubMed:28283058). Preferentially acts on NAD-capped transcripts in response to environmental stress (PubMed:31101919). Also acts as a non-canonical decapping enzyme that removes the entire cap structure of m7G capped or incompletely capped RNAs and mediates their subsequent degradation (By similarity). Specifically degrades pre-mRNAs with a defective 5'-end m7G cap and is part of a pre-mRNA capping quality control (By similarity). Has decapping activity toward incomplete 5'-end m7G cap mRNAs such as unmethylated 5'-end-capped RNA (cap0), while it has no activity toward 2'-O-ribose methylated m7G cap (cap1) (PubMed:29601584). In contrast to canonical decapping enzymes DCP2 and NUDT16, which cleave the cap within the triphosphate linkage, the decapping activity releases the entire cap structure GpppN and a 5'-end monophosphate RNA (By similarity). Also has 5'-3' exoribonuclease activities: The 5'-end monophosphate RNA is then degraded by the 5'-3' exoribonuclease activity, enabling this enzyme to decap and degrade incompletely capped mRNAs (PubMed:29601584). Also possesses RNA 5'-pyrophosphohydrolase activity by hydrolyzing the 5'-end triphosphate to release pyrophosphates (By similarity). Exhibits decapping activity towards FAD-capped RNAs (PubMed:32374864). Exhibits decapping activity towards dpCoA-capped RNAs in vitro (By similarity).</text>
</comment>
<comment type="catalytic activity">
    <reaction evidence="1">
        <text>a 5'-end triphospho-ribonucleoside in mRNA + H2O = a 5'-end phospho-ribonucleoside in mRNA + diphosphate + H(+)</text>
        <dbReference type="Rhea" id="RHEA:78683"/>
        <dbReference type="Rhea" id="RHEA-COMP:15692"/>
        <dbReference type="Rhea" id="RHEA-COMP:17164"/>
        <dbReference type="ChEBI" id="CHEBI:15377"/>
        <dbReference type="ChEBI" id="CHEBI:15378"/>
        <dbReference type="ChEBI" id="CHEBI:33019"/>
        <dbReference type="ChEBI" id="CHEBI:138282"/>
        <dbReference type="ChEBI" id="CHEBI:167618"/>
    </reaction>
    <physiologicalReaction direction="left-to-right" evidence="1">
        <dbReference type="Rhea" id="RHEA:78684"/>
    </physiologicalReaction>
</comment>
<comment type="catalytic activity">
    <reaction evidence="7 9">
        <text>a 5'-end NAD(+)-phospho-ribonucleoside in mRNA + H2O = a 5'-end phospho-ribonucleoside in mRNA + NAD(+) + H(+)</text>
        <dbReference type="Rhea" id="RHEA:60880"/>
        <dbReference type="Rhea" id="RHEA-COMP:15692"/>
        <dbReference type="Rhea" id="RHEA-COMP:15698"/>
        <dbReference type="ChEBI" id="CHEBI:15377"/>
        <dbReference type="ChEBI" id="CHEBI:15378"/>
        <dbReference type="ChEBI" id="CHEBI:57540"/>
        <dbReference type="ChEBI" id="CHEBI:138282"/>
        <dbReference type="ChEBI" id="CHEBI:144029"/>
    </reaction>
    <physiologicalReaction direction="left-to-right" evidence="15">
        <dbReference type="Rhea" id="RHEA:60881"/>
    </physiologicalReaction>
</comment>
<comment type="catalytic activity">
    <reaction evidence="1">
        <text>a 5'-end NAD(+)-phospho-ribonucleoside in snoRNA + H2O = a 5'-end phospho-ribonucleoside in snoRNA + NAD(+) + H(+)</text>
        <dbReference type="Rhea" id="RHEA:60892"/>
        <dbReference type="Rhea" id="RHEA-COMP:15699"/>
        <dbReference type="Rhea" id="RHEA-COMP:15700"/>
        <dbReference type="ChEBI" id="CHEBI:15377"/>
        <dbReference type="ChEBI" id="CHEBI:15378"/>
        <dbReference type="ChEBI" id="CHEBI:57540"/>
        <dbReference type="ChEBI" id="CHEBI:138282"/>
        <dbReference type="ChEBI" id="CHEBI:144029"/>
    </reaction>
    <physiologicalReaction direction="left-to-right" evidence="1">
        <dbReference type="Rhea" id="RHEA:60893"/>
    </physiologicalReaction>
</comment>
<comment type="catalytic activity">
    <reaction evidence="8">
        <text>a 5'-end (N(7)-methyl 5'-triphosphoguanosine)-ribonucleoside-ribonucleotide in mRNA + H2O = a (N(7)-methyl 5'-triphosphoguanosine)-nucleoside + a 5'-end phospho-ribonucleoside in mRNA + H(+)</text>
        <dbReference type="Rhea" id="RHEA:66928"/>
        <dbReference type="Rhea" id="RHEA-COMP:15692"/>
        <dbReference type="Rhea" id="RHEA-COMP:17313"/>
        <dbReference type="ChEBI" id="CHEBI:15377"/>
        <dbReference type="ChEBI" id="CHEBI:15378"/>
        <dbReference type="ChEBI" id="CHEBI:138282"/>
        <dbReference type="ChEBI" id="CHEBI:172876"/>
        <dbReference type="ChEBI" id="CHEBI:172877"/>
    </reaction>
    <physiologicalReaction direction="left-to-right" evidence="16">
        <dbReference type="Rhea" id="RHEA:66929"/>
    </physiologicalReaction>
</comment>
<comment type="catalytic activity">
    <reaction evidence="10">
        <text>a 5'-end FAD-phospho-ribonucleoside in mRNA + H2O = a 5'-end phospho-ribonucleoside in mRNA + FAD + H(+)</text>
        <dbReference type="Rhea" id="RHEA:67492"/>
        <dbReference type="Rhea" id="RHEA-COMP:15692"/>
        <dbReference type="Rhea" id="RHEA-COMP:17275"/>
        <dbReference type="ChEBI" id="CHEBI:15377"/>
        <dbReference type="ChEBI" id="CHEBI:15378"/>
        <dbReference type="ChEBI" id="CHEBI:57692"/>
        <dbReference type="ChEBI" id="CHEBI:138282"/>
        <dbReference type="ChEBI" id="CHEBI:172372"/>
    </reaction>
    <physiologicalReaction direction="left-to-right" evidence="10">
        <dbReference type="Rhea" id="RHEA:67493"/>
    </physiologicalReaction>
</comment>
<comment type="catalytic activity">
    <reaction evidence="1">
        <text>a 5'-end CoA-ribonucleoside in mRNA + H2O = 3'-dephospho-CoA + a 5'-end phospho-ribonucleoside in mRNA + H(+)</text>
        <dbReference type="Rhea" id="RHEA:67496"/>
        <dbReference type="Rhea" id="RHEA-COMP:15692"/>
        <dbReference type="Rhea" id="RHEA-COMP:17276"/>
        <dbReference type="ChEBI" id="CHEBI:15377"/>
        <dbReference type="ChEBI" id="CHEBI:15378"/>
        <dbReference type="ChEBI" id="CHEBI:57328"/>
        <dbReference type="ChEBI" id="CHEBI:138282"/>
        <dbReference type="ChEBI" id="CHEBI:172371"/>
    </reaction>
    <physiologicalReaction direction="left-to-right" evidence="1">
        <dbReference type="Rhea" id="RHEA:67497"/>
    </physiologicalReaction>
</comment>
<comment type="cofactor">
    <cofactor evidence="1">
        <name>Mg(2+)</name>
        <dbReference type="ChEBI" id="CHEBI:18420"/>
    </cofactor>
    <text evidence="1">Binds 2 magnesium ions.</text>
</comment>
<comment type="interaction">
    <interactant intactId="EBI-372173">
        <id>O77932</id>
    </interactant>
    <interactant intactId="EBI-10988864">
        <id>P46379-2</id>
        <label>BAG6</label>
    </interactant>
    <organismsDiffer>false</organismsDiffer>
    <experiments>3</experiments>
</comment>
<comment type="interaction">
    <interactant intactId="EBI-372173">
        <id>O77932</id>
    </interactant>
    <interactant intactId="EBI-357046">
        <id>Q99832</id>
        <label>CCT7</label>
    </interactant>
    <organismsDiffer>false</organismsDiffer>
    <experiments>3</experiments>
</comment>
<comment type="interaction">
    <interactant intactId="EBI-372173">
        <id>O77932</id>
    </interactant>
    <interactant intactId="EBI-12593112">
        <id>O75190-2</id>
        <label>DNAJB6</label>
    </interactant>
    <organismsDiffer>false</organismsDiffer>
    <experiments>3</experiments>
</comment>
<comment type="interaction">
    <interactant intactId="EBI-372173">
        <id>O77932</id>
    </interactant>
    <interactant intactId="EBI-395638">
        <id>O14645</id>
        <label>DNALI1</label>
    </interactant>
    <organismsDiffer>false</organismsDiffer>
    <experiments>3</experiments>
</comment>
<comment type="interaction">
    <interactant intactId="EBI-372173">
        <id>O77932</id>
    </interactant>
    <interactant intactId="EBI-1054228">
        <id>P41091</id>
        <label>EIF2S3</label>
    </interactant>
    <organismsDiffer>false</organismsDiffer>
    <experiments>3</experiments>
</comment>
<comment type="interaction">
    <interactant intactId="EBI-372173">
        <id>O77932</id>
    </interactant>
    <interactant intactId="EBI-25852368">
        <id>O75460-2</id>
        <label>ERN1</label>
    </interactant>
    <organismsDiffer>false</organismsDiffer>
    <experiments>3</experiments>
</comment>
<comment type="interaction">
    <interactant intactId="EBI-372173">
        <id>O77932</id>
    </interactant>
    <interactant intactId="EBI-10226858">
        <id>Q0VDC6</id>
        <label>FKBP1A</label>
    </interactant>
    <organismsDiffer>false</organismsDiffer>
    <experiments>3</experiments>
</comment>
<comment type="interaction">
    <interactant intactId="EBI-372173">
        <id>O77932</id>
    </interactant>
    <interactant intactId="EBI-352682">
        <id>P04792</id>
        <label>HSPB1</label>
    </interactant>
    <organismsDiffer>false</organismsDiffer>
    <experiments>3</experiments>
</comment>
<comment type="interaction">
    <interactant intactId="EBI-372173">
        <id>O77932</id>
    </interactant>
    <interactant intactId="EBI-352528">
        <id>P10809</id>
        <label>HSPD1</label>
    </interactant>
    <organismsDiffer>false</organismsDiffer>
    <experiments>3</experiments>
</comment>
<comment type="interaction">
    <interactant intactId="EBI-372173">
        <id>O77932</id>
    </interactant>
    <interactant intactId="EBI-10975473">
        <id>O60333-2</id>
        <label>KIF1B</label>
    </interactant>
    <organismsDiffer>false</organismsDiffer>
    <experiments>3</experiments>
</comment>
<comment type="interaction">
    <interactant intactId="EBI-372173">
        <id>O77932</id>
    </interactant>
    <interactant intactId="EBI-948266">
        <id>O14901</id>
        <label>KLF11</label>
    </interactant>
    <organismsDiffer>false</organismsDiffer>
    <experiments>3</experiments>
</comment>
<comment type="interaction">
    <interactant intactId="EBI-372173">
        <id>O77932</id>
    </interactant>
    <interactant intactId="EBI-716404">
        <id>P16284</id>
        <label>PECAM1</label>
    </interactant>
    <organismsDiffer>false</organismsDiffer>
    <experiments>3</experiments>
</comment>
<comment type="interaction">
    <interactant intactId="EBI-372173">
        <id>O77932</id>
    </interactant>
    <interactant intactId="EBI-21251460">
        <id>O60260-5</id>
        <label>PRKN</label>
    </interactant>
    <organismsDiffer>false</organismsDiffer>
    <experiments>3</experiments>
</comment>
<comment type="interaction">
    <interactant intactId="EBI-372173">
        <id>O77932</id>
    </interactant>
    <interactant intactId="EBI-749195">
        <id>P60891</id>
        <label>PRPS1</label>
    </interactant>
    <organismsDiffer>false</organismsDiffer>
    <experiments>3</experiments>
</comment>
<comment type="interaction">
    <interactant intactId="EBI-372173">
        <id>O77932</id>
    </interactant>
    <interactant intactId="EBI-396669">
        <id>Q9Y3C5</id>
        <label>RNF11</label>
    </interactant>
    <organismsDiffer>false</organismsDiffer>
    <experiments>3</experiments>
</comment>
<comment type="interaction">
    <interactant intactId="EBI-372173">
        <id>O77932</id>
    </interactant>
    <interactant intactId="EBI-1053431">
        <id>P49591</id>
        <label>SARS1</label>
    </interactant>
    <organismsDiffer>false</organismsDiffer>
    <experiments>3</experiments>
</comment>
<comment type="interaction">
    <interactant intactId="EBI-372173">
        <id>O77932</id>
    </interactant>
    <interactant intactId="EBI-473850">
        <id>P61086</id>
        <label>UBE2K</label>
    </interactant>
    <organismsDiffer>false</organismsDiffer>
    <experiments>3</experiments>
</comment>
<comment type="interaction">
    <interactant intactId="EBI-372173">
        <id>O77932</id>
    </interactant>
    <interactant intactId="EBI-353844">
        <id>P08670</id>
        <label>VIM</label>
    </interactant>
    <organismsDiffer>false</organismsDiffer>
    <experiments>3</experiments>
</comment>
<comment type="interaction">
    <interactant intactId="EBI-372173">
        <id>O77932</id>
    </interactant>
    <interactant intactId="EBI-720609">
        <id>O76024</id>
        <label>WFS1</label>
    </interactant>
    <organismsDiffer>false</organismsDiffer>
    <experiments>3</experiments>
</comment>
<comment type="subcellular location">
    <subcellularLocation>
        <location evidence="6 8">Nucleus</location>
    </subcellularLocation>
</comment>
<comment type="tissue specificity">
    <text evidence="11">Ubiquitously expressed.</text>
</comment>
<comment type="similarity">
    <text evidence="14">Belongs to the DXO/Dom3Z family.</text>
</comment>
<comment type="sequence caution" evidence="14">
    <conflict type="erroneous gene model prediction">
        <sequence resource="EMBL-CDS" id="AAB67983"/>
    </conflict>
</comment>
<comment type="sequence caution" evidence="14">
    <conflict type="erroneous gene model prediction">
        <sequence resource="EMBL-CDS" id="CAB89306"/>
    </conflict>
</comment>
<protein>
    <recommendedName>
        <fullName evidence="12">Decapping and exoribonuclease protein</fullName>
        <shortName evidence="12">DXO</shortName>
        <ecNumber evidence="8">3.6.1.-</ecNumber>
    </recommendedName>
    <alternativeName>
        <fullName evidence="14">5'-3' exoribonuclease DXO</fullName>
        <ecNumber evidence="8">3.1.13.-</ecNumber>
    </alternativeName>
    <alternativeName>
        <fullName evidence="13">Dom-3 homolog Z</fullName>
    </alternativeName>
    <alternativeName>
        <fullName evidence="14">NAD-capped RNA hydrolase DXO</fullName>
        <shortName evidence="14">DeNADding enzyme DXO</shortName>
        <ecNumber evidence="1">3.6.1.-</ecNumber>
    </alternativeName>
</protein>
<organism>
    <name type="scientific">Homo sapiens</name>
    <name type="common">Human</name>
    <dbReference type="NCBI Taxonomy" id="9606"/>
    <lineage>
        <taxon>Eukaryota</taxon>
        <taxon>Metazoa</taxon>
        <taxon>Chordata</taxon>
        <taxon>Craniata</taxon>
        <taxon>Vertebrata</taxon>
        <taxon>Euteleostomi</taxon>
        <taxon>Mammalia</taxon>
        <taxon>Eutheria</taxon>
        <taxon>Euarchontoglires</taxon>
        <taxon>Primates</taxon>
        <taxon>Haplorrhini</taxon>
        <taxon>Catarrhini</taxon>
        <taxon>Hominidae</taxon>
        <taxon>Homo</taxon>
    </lineage>
</organism>
<proteinExistence type="evidence at protein level"/>
<accession>O77932</accession>
<accession>A2CER3</accession>
<accession>B0UZ80</accession>
<accession>O15004</accession>
<accession>O78127</accession>
<accession>O78128</accession>
<accession>Q5ST60</accession>
<accession>Q6IPZ2</accession>
<accession>Q9NPK4</accession>